<protein>
    <recommendedName>
        <fullName evidence="1">Putative pre-16S rRNA nuclease</fullName>
        <ecNumber evidence="1">3.1.-.-</ecNumber>
    </recommendedName>
</protein>
<name>YQGF_CLOB6</name>
<evidence type="ECO:0000255" key="1">
    <source>
        <dbReference type="HAMAP-Rule" id="MF_00651"/>
    </source>
</evidence>
<keyword id="KW-0963">Cytoplasm</keyword>
<keyword id="KW-0378">Hydrolase</keyword>
<keyword id="KW-0540">Nuclease</keyword>
<keyword id="KW-0690">Ribosome biogenesis</keyword>
<comment type="function">
    <text evidence="1">Could be a nuclease involved in processing of the 5'-end of pre-16S rRNA.</text>
</comment>
<comment type="subcellular location">
    <subcellularLocation>
        <location evidence="1">Cytoplasm</location>
    </subcellularLocation>
</comment>
<comment type="similarity">
    <text evidence="1">Belongs to the YqgF nuclease family.</text>
</comment>
<feature type="chain" id="PRO_1000212406" description="Putative pre-16S rRNA nuclease">
    <location>
        <begin position="1"/>
        <end position="137"/>
    </location>
</feature>
<organism>
    <name type="scientific">Clostridium botulinum (strain 657 / Type Ba4)</name>
    <dbReference type="NCBI Taxonomy" id="515621"/>
    <lineage>
        <taxon>Bacteria</taxon>
        <taxon>Bacillati</taxon>
        <taxon>Bacillota</taxon>
        <taxon>Clostridia</taxon>
        <taxon>Eubacteriales</taxon>
        <taxon>Clostridiaceae</taxon>
        <taxon>Clostridium</taxon>
    </lineage>
</organism>
<dbReference type="EC" id="3.1.-.-" evidence="1"/>
<dbReference type="EMBL" id="CP001083">
    <property type="protein sequence ID" value="ACQ52981.1"/>
    <property type="molecule type" value="Genomic_DNA"/>
</dbReference>
<dbReference type="SMR" id="C3L148"/>
<dbReference type="KEGG" id="cbi:CLJ_B2792"/>
<dbReference type="HOGENOM" id="CLU_098240_2_0_9"/>
<dbReference type="Proteomes" id="UP000002333">
    <property type="component" value="Chromosome"/>
</dbReference>
<dbReference type="GO" id="GO:0005829">
    <property type="term" value="C:cytosol"/>
    <property type="evidence" value="ECO:0007669"/>
    <property type="project" value="TreeGrafter"/>
</dbReference>
<dbReference type="GO" id="GO:0004518">
    <property type="term" value="F:nuclease activity"/>
    <property type="evidence" value="ECO:0007669"/>
    <property type="project" value="UniProtKB-KW"/>
</dbReference>
<dbReference type="GO" id="GO:0000967">
    <property type="term" value="P:rRNA 5'-end processing"/>
    <property type="evidence" value="ECO:0007669"/>
    <property type="project" value="UniProtKB-UniRule"/>
</dbReference>
<dbReference type="CDD" id="cd16964">
    <property type="entry name" value="YqgF"/>
    <property type="match status" value="1"/>
</dbReference>
<dbReference type="FunFam" id="3.30.420.140:FF:000003">
    <property type="entry name" value="Putative pre-16S rRNA nuclease"/>
    <property type="match status" value="1"/>
</dbReference>
<dbReference type="Gene3D" id="3.30.420.140">
    <property type="entry name" value="YqgF/RNase H-like domain"/>
    <property type="match status" value="1"/>
</dbReference>
<dbReference type="HAMAP" id="MF_00651">
    <property type="entry name" value="Nuclease_YqgF"/>
    <property type="match status" value="1"/>
</dbReference>
<dbReference type="InterPro" id="IPR012337">
    <property type="entry name" value="RNaseH-like_sf"/>
</dbReference>
<dbReference type="InterPro" id="IPR005227">
    <property type="entry name" value="YqgF"/>
</dbReference>
<dbReference type="InterPro" id="IPR006641">
    <property type="entry name" value="YqgF/RNaseH-like_dom"/>
</dbReference>
<dbReference type="InterPro" id="IPR037027">
    <property type="entry name" value="YqgF/RNaseH-like_dom_sf"/>
</dbReference>
<dbReference type="NCBIfam" id="TIGR00250">
    <property type="entry name" value="RNAse_H_YqgF"/>
    <property type="match status" value="1"/>
</dbReference>
<dbReference type="PANTHER" id="PTHR33317">
    <property type="entry name" value="POLYNUCLEOTIDYL TRANSFERASE, RIBONUCLEASE H-LIKE SUPERFAMILY PROTEIN"/>
    <property type="match status" value="1"/>
</dbReference>
<dbReference type="PANTHER" id="PTHR33317:SF4">
    <property type="entry name" value="POLYNUCLEOTIDYL TRANSFERASE, RIBONUCLEASE H-LIKE SUPERFAMILY PROTEIN"/>
    <property type="match status" value="1"/>
</dbReference>
<dbReference type="Pfam" id="PF03652">
    <property type="entry name" value="RuvX"/>
    <property type="match status" value="1"/>
</dbReference>
<dbReference type="SMART" id="SM00732">
    <property type="entry name" value="YqgFc"/>
    <property type="match status" value="1"/>
</dbReference>
<dbReference type="SUPFAM" id="SSF53098">
    <property type="entry name" value="Ribonuclease H-like"/>
    <property type="match status" value="1"/>
</dbReference>
<gene>
    <name type="ordered locus">CLJ_B2792</name>
</gene>
<sequence length="137" mass="15361">MRILGLDIGDRTIGIAISDPLGFTAQGITTIRRKSEAYDLEEIKKICDKYEVDTIVSGLPKNMNGTLGPQSEKVLEFCDLIKEHLNIEIKMWDERLTTVAATRAMLEADLSRSKRKKIVDKVAATYILQGYLDSLSK</sequence>
<reference key="1">
    <citation type="submission" date="2008-05" db="EMBL/GenBank/DDBJ databases">
        <title>Genome sequence of Clostridium botulinum Ba4 strain 657.</title>
        <authorList>
            <person name="Shrivastava S."/>
            <person name="Brown J.L."/>
            <person name="Bruce D."/>
            <person name="Detter C."/>
            <person name="Munk C."/>
            <person name="Smith L.A."/>
            <person name="Smith T.J."/>
            <person name="Sutton G."/>
            <person name="Brettin T.S."/>
        </authorList>
    </citation>
    <scope>NUCLEOTIDE SEQUENCE [LARGE SCALE GENOMIC DNA]</scope>
    <source>
        <strain>657 / Type Ba4</strain>
    </source>
</reference>
<accession>C3L148</accession>
<proteinExistence type="inferred from homology"/>